<name>MNMG_BACSU</name>
<reference key="1">
    <citation type="journal article" date="1992" name="Mol. Microbiol.">
        <title>Genes and their organization in the replication origin region of the bacterial chromosome.</title>
        <authorList>
            <person name="Ogasawara N."/>
            <person name="Yoshikawa H."/>
        </authorList>
    </citation>
    <scope>NUCLEOTIDE SEQUENCE [GENOMIC DNA]</scope>
    <source>
        <strain>168 / CRK2000</strain>
    </source>
</reference>
<reference key="2">
    <citation type="journal article" date="1994" name="DNA Res.">
        <title>Systematic sequencing of the 180 kilobase region of the Bacillus subtilis chromosome containing the replication origin.</title>
        <authorList>
            <person name="Ogasawara N."/>
            <person name="Nakai S."/>
            <person name="Yoshikawa H."/>
        </authorList>
    </citation>
    <scope>NUCLEOTIDE SEQUENCE [GENOMIC DNA]</scope>
    <source>
        <strain>168</strain>
    </source>
</reference>
<reference key="3">
    <citation type="journal article" date="1997" name="Nature">
        <title>The complete genome sequence of the Gram-positive bacterium Bacillus subtilis.</title>
        <authorList>
            <person name="Kunst F."/>
            <person name="Ogasawara N."/>
            <person name="Moszer I."/>
            <person name="Albertini A.M."/>
            <person name="Alloni G."/>
            <person name="Azevedo V."/>
            <person name="Bertero M.G."/>
            <person name="Bessieres P."/>
            <person name="Bolotin A."/>
            <person name="Borchert S."/>
            <person name="Borriss R."/>
            <person name="Boursier L."/>
            <person name="Brans A."/>
            <person name="Braun M."/>
            <person name="Brignell S.C."/>
            <person name="Bron S."/>
            <person name="Brouillet S."/>
            <person name="Bruschi C.V."/>
            <person name="Caldwell B."/>
            <person name="Capuano V."/>
            <person name="Carter N.M."/>
            <person name="Choi S.-K."/>
            <person name="Codani J.-J."/>
            <person name="Connerton I.F."/>
            <person name="Cummings N.J."/>
            <person name="Daniel R.A."/>
            <person name="Denizot F."/>
            <person name="Devine K.M."/>
            <person name="Duesterhoeft A."/>
            <person name="Ehrlich S.D."/>
            <person name="Emmerson P.T."/>
            <person name="Entian K.-D."/>
            <person name="Errington J."/>
            <person name="Fabret C."/>
            <person name="Ferrari E."/>
            <person name="Foulger D."/>
            <person name="Fritz C."/>
            <person name="Fujita M."/>
            <person name="Fujita Y."/>
            <person name="Fuma S."/>
            <person name="Galizzi A."/>
            <person name="Galleron N."/>
            <person name="Ghim S.-Y."/>
            <person name="Glaser P."/>
            <person name="Goffeau A."/>
            <person name="Golightly E.J."/>
            <person name="Grandi G."/>
            <person name="Guiseppi G."/>
            <person name="Guy B.J."/>
            <person name="Haga K."/>
            <person name="Haiech J."/>
            <person name="Harwood C.R."/>
            <person name="Henaut A."/>
            <person name="Hilbert H."/>
            <person name="Holsappel S."/>
            <person name="Hosono S."/>
            <person name="Hullo M.-F."/>
            <person name="Itaya M."/>
            <person name="Jones L.-M."/>
            <person name="Joris B."/>
            <person name="Karamata D."/>
            <person name="Kasahara Y."/>
            <person name="Klaerr-Blanchard M."/>
            <person name="Klein C."/>
            <person name="Kobayashi Y."/>
            <person name="Koetter P."/>
            <person name="Koningstein G."/>
            <person name="Krogh S."/>
            <person name="Kumano M."/>
            <person name="Kurita K."/>
            <person name="Lapidus A."/>
            <person name="Lardinois S."/>
            <person name="Lauber J."/>
            <person name="Lazarevic V."/>
            <person name="Lee S.-M."/>
            <person name="Levine A."/>
            <person name="Liu H."/>
            <person name="Masuda S."/>
            <person name="Mauel C."/>
            <person name="Medigue C."/>
            <person name="Medina N."/>
            <person name="Mellado R.P."/>
            <person name="Mizuno M."/>
            <person name="Moestl D."/>
            <person name="Nakai S."/>
            <person name="Noback M."/>
            <person name="Noone D."/>
            <person name="O'Reilly M."/>
            <person name="Ogawa K."/>
            <person name="Ogiwara A."/>
            <person name="Oudega B."/>
            <person name="Park S.-H."/>
            <person name="Parro V."/>
            <person name="Pohl T.M."/>
            <person name="Portetelle D."/>
            <person name="Porwollik S."/>
            <person name="Prescott A.M."/>
            <person name="Presecan E."/>
            <person name="Pujic P."/>
            <person name="Purnelle B."/>
            <person name="Rapoport G."/>
            <person name="Rey M."/>
            <person name="Reynolds S."/>
            <person name="Rieger M."/>
            <person name="Rivolta C."/>
            <person name="Rocha E."/>
            <person name="Roche B."/>
            <person name="Rose M."/>
            <person name="Sadaie Y."/>
            <person name="Sato T."/>
            <person name="Scanlan E."/>
            <person name="Schleich S."/>
            <person name="Schroeter R."/>
            <person name="Scoffone F."/>
            <person name="Sekiguchi J."/>
            <person name="Sekowska A."/>
            <person name="Seror S.J."/>
            <person name="Serror P."/>
            <person name="Shin B.-S."/>
            <person name="Soldo B."/>
            <person name="Sorokin A."/>
            <person name="Tacconi E."/>
            <person name="Takagi T."/>
            <person name="Takahashi H."/>
            <person name="Takemaru K."/>
            <person name="Takeuchi M."/>
            <person name="Tamakoshi A."/>
            <person name="Tanaka T."/>
            <person name="Terpstra P."/>
            <person name="Tognoni A."/>
            <person name="Tosato V."/>
            <person name="Uchiyama S."/>
            <person name="Vandenbol M."/>
            <person name="Vannier F."/>
            <person name="Vassarotti A."/>
            <person name="Viari A."/>
            <person name="Wambutt R."/>
            <person name="Wedler E."/>
            <person name="Wedler H."/>
            <person name="Weitzenegger T."/>
            <person name="Winters P."/>
            <person name="Wipat A."/>
            <person name="Yamamoto H."/>
            <person name="Yamane K."/>
            <person name="Yasumoto K."/>
            <person name="Yata K."/>
            <person name="Yoshida K."/>
            <person name="Yoshikawa H.-F."/>
            <person name="Zumstein E."/>
            <person name="Yoshikawa H."/>
            <person name="Danchin A."/>
        </authorList>
    </citation>
    <scope>NUCLEOTIDE SEQUENCE [LARGE SCALE GENOMIC DNA]</scope>
    <source>
        <strain>168</strain>
    </source>
</reference>
<gene>
    <name evidence="1" type="primary">mnmG</name>
    <name evidence="1" type="synonym">gidA</name>
    <name type="ordered locus">BSU41010</name>
</gene>
<feature type="chain" id="PRO_0000117054" description="tRNA uridine 5-carboxymethylaminomethyl modification enzyme MnmG">
    <location>
        <begin position="1"/>
        <end position="628"/>
    </location>
</feature>
<feature type="binding site" evidence="1">
    <location>
        <begin position="14"/>
        <end position="19"/>
    </location>
    <ligand>
        <name>FAD</name>
        <dbReference type="ChEBI" id="CHEBI:57692"/>
    </ligand>
</feature>
<feature type="binding site" evidence="1">
    <location>
        <position position="126"/>
    </location>
    <ligand>
        <name>FAD</name>
        <dbReference type="ChEBI" id="CHEBI:57692"/>
    </ligand>
</feature>
<feature type="binding site" evidence="1">
    <location>
        <position position="181"/>
    </location>
    <ligand>
        <name>FAD</name>
        <dbReference type="ChEBI" id="CHEBI:57692"/>
    </ligand>
</feature>
<feature type="binding site" evidence="1">
    <location>
        <begin position="273"/>
        <end position="287"/>
    </location>
    <ligand>
        <name>NAD(+)</name>
        <dbReference type="ChEBI" id="CHEBI:57540"/>
    </ligand>
</feature>
<feature type="binding site" evidence="1">
    <location>
        <position position="370"/>
    </location>
    <ligand>
        <name>FAD</name>
        <dbReference type="ChEBI" id="CHEBI:57692"/>
    </ligand>
</feature>
<proteinExistence type="inferred from homology"/>
<organism>
    <name type="scientific">Bacillus subtilis (strain 168)</name>
    <dbReference type="NCBI Taxonomy" id="224308"/>
    <lineage>
        <taxon>Bacteria</taxon>
        <taxon>Bacillati</taxon>
        <taxon>Bacillota</taxon>
        <taxon>Bacilli</taxon>
        <taxon>Bacillales</taxon>
        <taxon>Bacillaceae</taxon>
        <taxon>Bacillus</taxon>
    </lineage>
</organism>
<accession>P25812</accession>
<dbReference type="EMBL" id="X62539">
    <property type="protein sequence ID" value="CAA44404.1"/>
    <property type="molecule type" value="Genomic_DNA"/>
</dbReference>
<dbReference type="EMBL" id="D26185">
    <property type="protein sequence ID" value="BAA05231.1"/>
    <property type="molecule type" value="Genomic_DNA"/>
</dbReference>
<dbReference type="EMBL" id="AL009126">
    <property type="protein sequence ID" value="CAB16138.1"/>
    <property type="molecule type" value="Genomic_DNA"/>
</dbReference>
<dbReference type="PIR" id="I40440">
    <property type="entry name" value="BWBSGA"/>
</dbReference>
<dbReference type="RefSeq" id="WP_003226825.1">
    <property type="nucleotide sequence ID" value="NZ_OZ025638.1"/>
</dbReference>
<dbReference type="SMR" id="P25812"/>
<dbReference type="FunCoup" id="P25812">
    <property type="interactions" value="780"/>
</dbReference>
<dbReference type="IntAct" id="P25812">
    <property type="interactions" value="1"/>
</dbReference>
<dbReference type="MINT" id="P25812"/>
<dbReference type="STRING" id="224308.BSU41010"/>
<dbReference type="jPOST" id="P25812"/>
<dbReference type="PaxDb" id="224308-BSU41010"/>
<dbReference type="EnsemblBacteria" id="CAB16138">
    <property type="protein sequence ID" value="CAB16138"/>
    <property type="gene ID" value="BSU_41010"/>
</dbReference>
<dbReference type="GeneID" id="937932"/>
<dbReference type="KEGG" id="bsu:BSU41010"/>
<dbReference type="PATRIC" id="fig|224308.179.peg.4443"/>
<dbReference type="eggNOG" id="COG0445">
    <property type="taxonomic scope" value="Bacteria"/>
</dbReference>
<dbReference type="InParanoid" id="P25812"/>
<dbReference type="OrthoDB" id="9815560at2"/>
<dbReference type="PhylomeDB" id="P25812"/>
<dbReference type="BioCyc" id="BSUB:BSU41010-MONOMER"/>
<dbReference type="Proteomes" id="UP000001570">
    <property type="component" value="Chromosome"/>
</dbReference>
<dbReference type="GO" id="GO:0005829">
    <property type="term" value="C:cytosol"/>
    <property type="evidence" value="ECO:0000318"/>
    <property type="project" value="GO_Central"/>
</dbReference>
<dbReference type="GO" id="GO:0050660">
    <property type="term" value="F:flavin adenine dinucleotide binding"/>
    <property type="evidence" value="ECO:0000318"/>
    <property type="project" value="GO_Central"/>
</dbReference>
<dbReference type="GO" id="GO:0030488">
    <property type="term" value="P:tRNA methylation"/>
    <property type="evidence" value="ECO:0000318"/>
    <property type="project" value="GO_Central"/>
</dbReference>
<dbReference type="GO" id="GO:0002098">
    <property type="term" value="P:tRNA wobble uridine modification"/>
    <property type="evidence" value="ECO:0000318"/>
    <property type="project" value="GO_Central"/>
</dbReference>
<dbReference type="FunFam" id="1.10.10.1800:FF:000001">
    <property type="entry name" value="tRNA uridine 5-carboxymethylaminomethyl modification enzyme MnmG"/>
    <property type="match status" value="1"/>
</dbReference>
<dbReference type="FunFam" id="1.10.150.570:FF:000001">
    <property type="entry name" value="tRNA uridine 5-carboxymethylaminomethyl modification enzyme MnmG"/>
    <property type="match status" value="1"/>
</dbReference>
<dbReference type="FunFam" id="3.50.50.60:FF:000002">
    <property type="entry name" value="tRNA uridine 5-carboxymethylaminomethyl modification enzyme MnmG"/>
    <property type="match status" value="1"/>
</dbReference>
<dbReference type="FunFam" id="3.50.50.60:FF:000063">
    <property type="entry name" value="tRNA uridine 5-carboxymethylaminomethyl modification enzyme MnmG"/>
    <property type="match status" value="1"/>
</dbReference>
<dbReference type="Gene3D" id="3.50.50.60">
    <property type="entry name" value="FAD/NAD(P)-binding domain"/>
    <property type="match status" value="2"/>
</dbReference>
<dbReference type="Gene3D" id="1.10.150.570">
    <property type="entry name" value="GidA associated domain, C-terminal subdomain"/>
    <property type="match status" value="1"/>
</dbReference>
<dbReference type="Gene3D" id="1.10.10.1800">
    <property type="entry name" value="tRNA uridine 5-carboxymethylaminomethyl modification enzyme MnmG/GidA"/>
    <property type="match status" value="1"/>
</dbReference>
<dbReference type="HAMAP" id="MF_00129">
    <property type="entry name" value="MnmG_GidA"/>
    <property type="match status" value="1"/>
</dbReference>
<dbReference type="InterPro" id="IPR036188">
    <property type="entry name" value="FAD/NAD-bd_sf"/>
</dbReference>
<dbReference type="InterPro" id="IPR049312">
    <property type="entry name" value="GIDA_C_N"/>
</dbReference>
<dbReference type="InterPro" id="IPR004416">
    <property type="entry name" value="MnmG"/>
</dbReference>
<dbReference type="InterPro" id="IPR002218">
    <property type="entry name" value="MnmG-rel"/>
</dbReference>
<dbReference type="InterPro" id="IPR020595">
    <property type="entry name" value="MnmG-rel_CS"/>
</dbReference>
<dbReference type="InterPro" id="IPR026904">
    <property type="entry name" value="MnmG_C"/>
</dbReference>
<dbReference type="InterPro" id="IPR047001">
    <property type="entry name" value="MnmG_C_subdom"/>
</dbReference>
<dbReference type="InterPro" id="IPR044920">
    <property type="entry name" value="MnmG_C_subdom_sf"/>
</dbReference>
<dbReference type="InterPro" id="IPR040131">
    <property type="entry name" value="MnmG_N"/>
</dbReference>
<dbReference type="NCBIfam" id="TIGR00136">
    <property type="entry name" value="mnmG_gidA"/>
    <property type="match status" value="1"/>
</dbReference>
<dbReference type="PANTHER" id="PTHR11806">
    <property type="entry name" value="GLUCOSE INHIBITED DIVISION PROTEIN A"/>
    <property type="match status" value="1"/>
</dbReference>
<dbReference type="PANTHER" id="PTHR11806:SF0">
    <property type="entry name" value="PROTEIN MTO1 HOMOLOG, MITOCHONDRIAL"/>
    <property type="match status" value="1"/>
</dbReference>
<dbReference type="Pfam" id="PF01134">
    <property type="entry name" value="GIDA"/>
    <property type="match status" value="1"/>
</dbReference>
<dbReference type="Pfam" id="PF21680">
    <property type="entry name" value="GIDA_C_1st"/>
    <property type="match status" value="1"/>
</dbReference>
<dbReference type="Pfam" id="PF13932">
    <property type="entry name" value="SAM_GIDA_C"/>
    <property type="match status" value="1"/>
</dbReference>
<dbReference type="SMART" id="SM01228">
    <property type="entry name" value="GIDA_assoc_3"/>
    <property type="match status" value="1"/>
</dbReference>
<dbReference type="SUPFAM" id="SSF51905">
    <property type="entry name" value="FAD/NAD(P)-binding domain"/>
    <property type="match status" value="1"/>
</dbReference>
<dbReference type="PROSITE" id="PS01280">
    <property type="entry name" value="GIDA_1"/>
    <property type="match status" value="1"/>
</dbReference>
<dbReference type="PROSITE" id="PS01281">
    <property type="entry name" value="GIDA_2"/>
    <property type="match status" value="1"/>
</dbReference>
<comment type="function">
    <text evidence="1">NAD-binding protein involved in the addition of a carboxymethylaminomethyl (cmnm) group at the wobble position (U34) of certain tRNAs, forming tRNA-cmnm(5)s(2)U34.</text>
</comment>
<comment type="cofactor">
    <cofactor evidence="1">
        <name>FAD</name>
        <dbReference type="ChEBI" id="CHEBI:57692"/>
    </cofactor>
</comment>
<comment type="subunit">
    <text evidence="1">Homodimer. Heterotetramer of two MnmE and two MnmG subunits.</text>
</comment>
<comment type="subcellular location">
    <subcellularLocation>
        <location evidence="1">Cytoplasm</location>
    </subcellularLocation>
</comment>
<comment type="similarity">
    <text evidence="1">Belongs to the MnmG family.</text>
</comment>
<keyword id="KW-0963">Cytoplasm</keyword>
<keyword id="KW-0274">FAD</keyword>
<keyword id="KW-0285">Flavoprotein</keyword>
<keyword id="KW-0520">NAD</keyword>
<keyword id="KW-1185">Reference proteome</keyword>
<keyword id="KW-0819">tRNA processing</keyword>
<protein>
    <recommendedName>
        <fullName evidence="1">tRNA uridine 5-carboxymethylaminomethyl modification enzyme MnmG</fullName>
    </recommendedName>
    <alternativeName>
        <fullName evidence="1">Glucose-inhibited division protein A</fullName>
    </alternativeName>
</protein>
<sequence length="628" mass="69753">MGYEAGQYDVIVIGAGHAGVEAALASARQGAKTLVLTINLDMVAFMPCNPSVGGPAKGIVVREIDALGGEMGRNIDKTHIQMRMLNTGKGPAVRALRAQADKFQYQHEMKNTLEKEPNLTLLQGIVERLIVEDGECRGVITQTGAHYRAKAVVMTTGTYLRGRIILGDLSYSSGPNNQQPSIKLSEHLEELGFDLVRFKTGTPPRVKSDTIDYSKTEIQPGDDVPRAFSYETVEYITDQLPCWLTYTSPETHEIIDSNLHRSPMYSGMIKGTGPRYCPSIEDKVVRFNDKPRHQIFLEPEGRNTQEVYVQGLSTSLPEDVQQRMLATIPGLENVQMMRAGYAIEYDAIVPTQLWPTLETKKITNLYTAGQINGTSGYEEAAGQGIMAGINAGRKALGKEEVILSRSDAYIGVLIDDLVTKGTNEPYRLLTSRAEYRLLLRHDNADLRLTEIGHRIGLISDERYAAFEKKKAAIEAEKKRLHSVIIKPSPENQEYIRSLGGSELKDGVRGTDLMKRPEMNYETVTKLAPPEVPVPQDVAEQVEIQVKYEGYIEKSLQQVEKLKKMENKKIPDRIDYDAIKGIATEARQKLKNVRPLSVAQASRISGVNPADISILLVYLEQGRIAKIAE</sequence>
<evidence type="ECO:0000255" key="1">
    <source>
        <dbReference type="HAMAP-Rule" id="MF_00129"/>
    </source>
</evidence>